<sequence>MAPVVKNEPQHAKILAIGTANPPNVFHQKDYPDFLFRVTKNEHRTDLREKFDRICEKSRTKKRYLHLTEEMLKANPNIYTYGAPSLNVRQDICNIEVPKLGQEASLKAIKEWGQPISKITHLIFCTASCVDMPGCDFQLIKLLGLDPSVTRTMIYEAGCYAGATVLRMAKDFAENNKGARVLVVCAEITTVFFHGLTDTHLDILVGQALFADGASAVIVGANPEPEIERPLFEIVACRQTILPNSEHGVVANIREMGFNYYLSGDVPKFVGGNVVDFMTKTFEKVDGKNKDWNSLFFSVHPGGPAIVDQVEEKLGLKEGKLRATRHVLSEYGNMGAPTVHFILDEMRNKSIEEGKTTTGEGLEWGVVIGIGPGLTVETAVLRSEFITY</sequence>
<organism>
    <name type="scientific">Sorbus aucuparia</name>
    <name type="common">European mountain ash</name>
    <name type="synonym">Rowan</name>
    <dbReference type="NCBI Taxonomy" id="36599"/>
    <lineage>
        <taxon>Eukaryota</taxon>
        <taxon>Viridiplantae</taxon>
        <taxon>Streptophyta</taxon>
        <taxon>Embryophyta</taxon>
        <taxon>Tracheophyta</taxon>
        <taxon>Spermatophyta</taxon>
        <taxon>Magnoliopsida</taxon>
        <taxon>eudicotyledons</taxon>
        <taxon>Gunneridae</taxon>
        <taxon>Pentapetalae</taxon>
        <taxon>rosids</taxon>
        <taxon>fabids</taxon>
        <taxon>Rosales</taxon>
        <taxon>Rosaceae</taxon>
        <taxon>Amygdaloideae</taxon>
        <taxon>Maleae</taxon>
        <taxon>Sorbus</taxon>
    </lineage>
</organism>
<keyword id="KW-0012">Acyltransferase</keyword>
<keyword id="KW-0808">Transferase</keyword>
<accession>D2DRC5</accession>
<name>BIPS3_SORAU</name>
<protein>
    <recommendedName>
        <fullName>4-hydroxycoumarin synthase 2</fullName>
        <ecNumber>2.3.1.208</ecNumber>
    </recommendedName>
    <alternativeName>
        <fullName>Biphenyl synthase 3</fullName>
        <shortName>SaBIS3</shortName>
    </alternativeName>
</protein>
<gene>
    <name type="primary">BIS3</name>
</gene>
<evidence type="ECO:0000250" key="1"/>
<evidence type="ECO:0000269" key="2">
    <source>
    </source>
</evidence>
<evidence type="ECO:0000305" key="3"/>
<feature type="chain" id="PRO_0000421869" description="4-hydroxycoumarin synthase 2">
    <location>
        <begin position="1"/>
        <end position="388"/>
    </location>
</feature>
<feature type="active site" evidence="1">
    <location>
        <position position="159"/>
    </location>
</feature>
<proteinExistence type="evidence at protein level"/>
<reference key="1">
    <citation type="journal article" date="2010" name="Plant Mol. Biol.">
        <title>A novel 4-hydroxycoumarin biosynthetic pathway.</title>
        <authorList>
            <person name="Liu B."/>
            <person name="Raeth T."/>
            <person name="Beuerle T."/>
            <person name="Beerhues L."/>
        </authorList>
    </citation>
    <scope>NUCLEOTIDE SEQUENCE [MRNA]</scope>
    <scope>FUNCTION</scope>
    <scope>INDUCTION BY ELICITOR</scope>
    <scope>BIOPHYSICOCHEMICAL PROPERTIES</scope>
</reference>
<dbReference type="EC" id="2.3.1.208"/>
<dbReference type="EMBL" id="FJ706069">
    <property type="protein sequence ID" value="ACW82505.1"/>
    <property type="molecule type" value="mRNA"/>
</dbReference>
<dbReference type="SMR" id="D2DRC5"/>
<dbReference type="KEGG" id="ag:ACW82505"/>
<dbReference type="SABIO-RK" id="D2DRC5"/>
<dbReference type="GO" id="GO:0033815">
    <property type="term" value="F:biphenyl synthase activity"/>
    <property type="evidence" value="ECO:0000314"/>
    <property type="project" value="UniProtKB"/>
</dbReference>
<dbReference type="GO" id="GO:1901886">
    <property type="term" value="P:2-hydroxybenzoyl-CoA catabolic process"/>
    <property type="evidence" value="ECO:0000314"/>
    <property type="project" value="UniProtKB"/>
</dbReference>
<dbReference type="GO" id="GO:1901884">
    <property type="term" value="P:4-hydroxycoumarin biosynthetic process"/>
    <property type="evidence" value="ECO:0000314"/>
    <property type="project" value="UniProtKB"/>
</dbReference>
<dbReference type="GO" id="GO:0009805">
    <property type="term" value="P:coumarin biosynthetic process"/>
    <property type="evidence" value="ECO:0000314"/>
    <property type="project" value="UniProtKB"/>
</dbReference>
<dbReference type="GO" id="GO:0030639">
    <property type="term" value="P:polyketide biosynthetic process"/>
    <property type="evidence" value="ECO:0007669"/>
    <property type="project" value="TreeGrafter"/>
</dbReference>
<dbReference type="CDD" id="cd00831">
    <property type="entry name" value="CHS_like"/>
    <property type="match status" value="1"/>
</dbReference>
<dbReference type="FunFam" id="3.40.47.10:FF:000014">
    <property type="entry name" value="Chalcone synthase 1"/>
    <property type="match status" value="1"/>
</dbReference>
<dbReference type="FunFam" id="3.40.47.10:FF:000025">
    <property type="entry name" value="Chalcone synthase 2"/>
    <property type="match status" value="1"/>
</dbReference>
<dbReference type="Gene3D" id="3.40.47.10">
    <property type="match status" value="2"/>
</dbReference>
<dbReference type="InterPro" id="IPR012328">
    <property type="entry name" value="Chalcone/stilbene_synt_C"/>
</dbReference>
<dbReference type="InterPro" id="IPR001099">
    <property type="entry name" value="Chalcone/stilbene_synt_N"/>
</dbReference>
<dbReference type="InterPro" id="IPR011141">
    <property type="entry name" value="Polyketide_synthase_type-III"/>
</dbReference>
<dbReference type="InterPro" id="IPR016039">
    <property type="entry name" value="Thiolase-like"/>
</dbReference>
<dbReference type="PANTHER" id="PTHR11877:SF14">
    <property type="entry name" value="CHALCONE SYNTHASE"/>
    <property type="match status" value="1"/>
</dbReference>
<dbReference type="PANTHER" id="PTHR11877">
    <property type="entry name" value="HYDROXYMETHYLGLUTARYL-COA SYNTHASE"/>
    <property type="match status" value="1"/>
</dbReference>
<dbReference type="Pfam" id="PF02797">
    <property type="entry name" value="Chal_sti_synt_C"/>
    <property type="match status" value="1"/>
</dbReference>
<dbReference type="Pfam" id="PF00195">
    <property type="entry name" value="Chal_sti_synt_N"/>
    <property type="match status" value="1"/>
</dbReference>
<dbReference type="PIRSF" id="PIRSF000451">
    <property type="entry name" value="PKS_III"/>
    <property type="match status" value="1"/>
</dbReference>
<dbReference type="SUPFAM" id="SSF53901">
    <property type="entry name" value="Thiolase-like"/>
    <property type="match status" value="2"/>
</dbReference>
<comment type="function">
    <text evidence="2">Type III polyketide synthase involved preferentially in the biosynthesis of 4-hydroxycoumarin from salicoyl-CoA. Can also use benzoyl-CoA and malonyl-CoA to produce 3,5-dihydroxybiphenyl as a major product and benzoyldiacetic acid lactone as a minor side product. Can also use m-hydroxybenzoyl-CoA as substrate, producing m-hydroxybenzoyl diacetic acid lactone as a derailment product. No activity with p-hydroxybenzoyl-CoA, CoA-linked cinnamic acids or acetyl-CoA.</text>
</comment>
<comment type="catalytic activity">
    <reaction>
        <text>2-hydroxybenzoyl-CoA + malonyl-CoA = 4-hydroxycoumarin + CO2 + 2 CoA</text>
        <dbReference type="Rhea" id="RHEA:34175"/>
        <dbReference type="ChEBI" id="CHEBI:16526"/>
        <dbReference type="ChEBI" id="CHEBI:57287"/>
        <dbReference type="ChEBI" id="CHEBI:57384"/>
        <dbReference type="ChEBI" id="CHEBI:67148"/>
        <dbReference type="ChEBI" id="CHEBI:77858"/>
        <dbReference type="EC" id="2.3.1.208"/>
    </reaction>
</comment>
<comment type="biophysicochemical properties">
    <kinetics>
        <KM evidence="2">1.6 uM for benzoyl-CoA</KM>
        <KM evidence="2">10.1 uM for malonyl-CoA</KM>
        <KM evidence="2">3.2 uM for salicoyl-CoA</KM>
        <text>kcat is 1.02 min(-1) with benzoyl-CoA as substrate. kcat is 2.22 min(-1) with salicoyl-CoA as substrate.</text>
    </kinetics>
    <phDependence>
        <text evidence="2">Optimum pH is 6.5-7.0.</text>
    </phDependence>
    <temperatureDependence>
        <text evidence="2">Optimum temperature is 35 degrees Celsius.</text>
    </temperatureDependence>
</comment>
<comment type="subunit">
    <text evidence="1">Homodimer.</text>
</comment>
<comment type="induction">
    <text evidence="2">Up-regulated by elicitor.</text>
</comment>
<comment type="similarity">
    <text evidence="3">Belongs to the thiolase-like superfamily. Chalcone/stilbene synthases family.</text>
</comment>